<protein>
    <recommendedName>
        <fullName evidence="1">DNA double-strand break repair Rad50 ATPase</fullName>
    </recommendedName>
</protein>
<evidence type="ECO:0000255" key="1">
    <source>
        <dbReference type="HAMAP-Rule" id="MF_00449"/>
    </source>
</evidence>
<accession>Q9UZC8</accession>
<accession>G8ZKL3</accession>
<feature type="chain" id="PRO_0000138660" description="DNA double-strand break repair Rad50 ATPase">
    <location>
        <begin position="1"/>
        <end position="880"/>
    </location>
</feature>
<feature type="domain" description="Zinc-hook" evidence="1">
    <location>
        <begin position="397"/>
        <end position="494"/>
    </location>
</feature>
<feature type="coiled-coil region" evidence="1">
    <location>
        <begin position="225"/>
        <end position="336"/>
    </location>
</feature>
<feature type="coiled-coil region" evidence="1">
    <location>
        <begin position="391"/>
        <end position="744"/>
    </location>
</feature>
<feature type="binding site" evidence="1">
    <location>
        <position position="12"/>
    </location>
    <ligand>
        <name>ATP</name>
        <dbReference type="ChEBI" id="CHEBI:30616"/>
    </ligand>
</feature>
<feature type="binding site" evidence="1">
    <location>
        <begin position="32"/>
        <end position="38"/>
    </location>
    <ligand>
        <name>ATP</name>
        <dbReference type="ChEBI" id="CHEBI:30616"/>
    </ligand>
</feature>
<feature type="binding site" evidence="1">
    <location>
        <position position="138"/>
    </location>
    <ligand>
        <name>ATP</name>
        <dbReference type="ChEBI" id="CHEBI:30616"/>
    </ligand>
</feature>
<feature type="binding site" evidence="1">
    <location>
        <position position="442"/>
    </location>
    <ligand>
        <name>Zn(2+)</name>
        <dbReference type="ChEBI" id="CHEBI:29105"/>
    </ligand>
</feature>
<feature type="binding site" evidence="1">
    <location>
        <position position="445"/>
    </location>
    <ligand>
        <name>Zn(2+)</name>
        <dbReference type="ChEBI" id="CHEBI:29105"/>
    </ligand>
</feature>
<feature type="binding site" evidence="1">
    <location>
        <begin position="789"/>
        <end position="794"/>
    </location>
    <ligand>
        <name>ATP</name>
        <dbReference type="ChEBI" id="CHEBI:30616"/>
    </ligand>
</feature>
<gene>
    <name evidence="1" type="primary">rad50</name>
    <name type="ordered locus">PYRAB12200</name>
    <name type="ORF">PAB0812</name>
</gene>
<organism>
    <name type="scientific">Pyrococcus abyssi (strain GE5 / Orsay)</name>
    <dbReference type="NCBI Taxonomy" id="272844"/>
    <lineage>
        <taxon>Archaea</taxon>
        <taxon>Methanobacteriati</taxon>
        <taxon>Methanobacteriota</taxon>
        <taxon>Thermococci</taxon>
        <taxon>Thermococcales</taxon>
        <taxon>Thermococcaceae</taxon>
        <taxon>Pyrococcus</taxon>
    </lineage>
</organism>
<name>RAD50_PYRAB</name>
<dbReference type="EMBL" id="AJ248286">
    <property type="protein sequence ID" value="CAB50131.1"/>
    <property type="molecule type" value="Genomic_DNA"/>
</dbReference>
<dbReference type="EMBL" id="HE613800">
    <property type="protein sequence ID" value="CCE70656.1"/>
    <property type="molecule type" value="Genomic_DNA"/>
</dbReference>
<dbReference type="PIR" id="F75103">
    <property type="entry name" value="F75103"/>
</dbReference>
<dbReference type="RefSeq" id="WP_010868338.1">
    <property type="nucleotide sequence ID" value="NC_000868.1"/>
</dbReference>
<dbReference type="SMR" id="Q9UZC8"/>
<dbReference type="STRING" id="272844.PAB0812"/>
<dbReference type="KEGG" id="pab:PAB0812"/>
<dbReference type="PATRIC" id="fig|272844.11.peg.1300"/>
<dbReference type="eggNOG" id="arCOG00368">
    <property type="taxonomic scope" value="Archaea"/>
</dbReference>
<dbReference type="HOGENOM" id="CLU_004785_0_2_2"/>
<dbReference type="OrthoDB" id="25344at2157"/>
<dbReference type="PhylomeDB" id="Q9UZC8"/>
<dbReference type="Proteomes" id="UP000000810">
    <property type="component" value="Chromosome"/>
</dbReference>
<dbReference type="Proteomes" id="UP000009139">
    <property type="component" value="Chromosome"/>
</dbReference>
<dbReference type="GO" id="GO:0005524">
    <property type="term" value="F:ATP binding"/>
    <property type="evidence" value="ECO:0007669"/>
    <property type="project" value="UniProtKB-UniRule"/>
</dbReference>
<dbReference type="GO" id="GO:0016887">
    <property type="term" value="F:ATP hydrolysis activity"/>
    <property type="evidence" value="ECO:0007669"/>
    <property type="project" value="UniProtKB-UniRule"/>
</dbReference>
<dbReference type="GO" id="GO:0008270">
    <property type="term" value="F:zinc ion binding"/>
    <property type="evidence" value="ECO:0007669"/>
    <property type="project" value="UniProtKB-UniRule"/>
</dbReference>
<dbReference type="GO" id="GO:0006302">
    <property type="term" value="P:double-strand break repair"/>
    <property type="evidence" value="ECO:0007669"/>
    <property type="project" value="UniProtKB-UniRule"/>
</dbReference>
<dbReference type="Gene3D" id="6.10.250.70">
    <property type="match status" value="1"/>
</dbReference>
<dbReference type="Gene3D" id="1.10.287.510">
    <property type="entry name" value="Helix hairpin bin"/>
    <property type="match status" value="1"/>
</dbReference>
<dbReference type="Gene3D" id="3.40.50.300">
    <property type="entry name" value="P-loop containing nucleotide triphosphate hydrolases"/>
    <property type="match status" value="2"/>
</dbReference>
<dbReference type="HAMAP" id="MF_00449">
    <property type="entry name" value="RAD50"/>
    <property type="match status" value="1"/>
</dbReference>
<dbReference type="InterPro" id="IPR003593">
    <property type="entry name" value="AAA+_ATPase"/>
</dbReference>
<dbReference type="InterPro" id="IPR003959">
    <property type="entry name" value="ATPase_AAA_core"/>
</dbReference>
<dbReference type="InterPro" id="IPR027417">
    <property type="entry name" value="P-loop_NTPase"/>
</dbReference>
<dbReference type="InterPro" id="IPR022982">
    <property type="entry name" value="Rad50_ATPase_archaeal"/>
</dbReference>
<dbReference type="InterPro" id="IPR003395">
    <property type="entry name" value="RecF/RecN/SMC_N"/>
</dbReference>
<dbReference type="InterPro" id="IPR013134">
    <property type="entry name" value="Zn_hook_RAD50"/>
</dbReference>
<dbReference type="NCBIfam" id="NF003034">
    <property type="entry name" value="PRK03918.1"/>
    <property type="match status" value="1"/>
</dbReference>
<dbReference type="PANTHER" id="PTHR32114">
    <property type="entry name" value="ABC TRANSPORTER ABCH.3"/>
    <property type="match status" value="1"/>
</dbReference>
<dbReference type="PANTHER" id="PTHR32114:SF2">
    <property type="entry name" value="ABC TRANSPORTER ABCH.3"/>
    <property type="match status" value="1"/>
</dbReference>
<dbReference type="Pfam" id="PF13304">
    <property type="entry name" value="AAA_21"/>
    <property type="match status" value="1"/>
</dbReference>
<dbReference type="Pfam" id="PF04423">
    <property type="entry name" value="Rad50_zn_hook"/>
    <property type="match status" value="1"/>
</dbReference>
<dbReference type="Pfam" id="PF02463">
    <property type="entry name" value="SMC_N"/>
    <property type="match status" value="1"/>
</dbReference>
<dbReference type="SMART" id="SM00382">
    <property type="entry name" value="AAA"/>
    <property type="match status" value="1"/>
</dbReference>
<dbReference type="SUPFAM" id="SSF52540">
    <property type="entry name" value="P-loop containing nucleoside triphosphate hydrolases"/>
    <property type="match status" value="1"/>
</dbReference>
<dbReference type="SUPFAM" id="SSF75712">
    <property type="entry name" value="Rad50 coiled-coil Zn hook"/>
    <property type="match status" value="1"/>
</dbReference>
<dbReference type="PROSITE" id="PS51131">
    <property type="entry name" value="ZN_HOOK"/>
    <property type="match status" value="1"/>
</dbReference>
<reference key="1">
    <citation type="journal article" date="2003" name="Mol. Microbiol.">
        <title>An integrated analysis of the genome of the hyperthermophilic archaeon Pyrococcus abyssi.</title>
        <authorList>
            <person name="Cohen G.N."/>
            <person name="Barbe V."/>
            <person name="Flament D."/>
            <person name="Galperin M."/>
            <person name="Heilig R."/>
            <person name="Lecompte O."/>
            <person name="Poch O."/>
            <person name="Prieur D."/>
            <person name="Querellou J."/>
            <person name="Ripp R."/>
            <person name="Thierry J.-C."/>
            <person name="Van der Oost J."/>
            <person name="Weissenbach J."/>
            <person name="Zivanovic Y."/>
            <person name="Forterre P."/>
        </authorList>
    </citation>
    <scope>NUCLEOTIDE SEQUENCE [LARGE SCALE GENOMIC DNA]</scope>
    <source>
        <strain>GE5 / Orsay</strain>
    </source>
</reference>
<reference key="2">
    <citation type="journal article" date="2012" name="Curr. Microbiol.">
        <title>Re-annotation of two hyperthermophilic archaea Pyrococcus abyssi GE5 and Pyrococcus furiosus DSM 3638.</title>
        <authorList>
            <person name="Gao J."/>
            <person name="Wang J."/>
        </authorList>
    </citation>
    <scope>GENOME REANNOTATION</scope>
    <source>
        <strain>GE5 / Orsay</strain>
    </source>
</reference>
<keyword id="KW-0067">ATP-binding</keyword>
<keyword id="KW-0175">Coiled coil</keyword>
<keyword id="KW-0227">DNA damage</keyword>
<keyword id="KW-0234">DNA repair</keyword>
<keyword id="KW-0378">Hydrolase</keyword>
<keyword id="KW-0479">Metal-binding</keyword>
<keyword id="KW-0547">Nucleotide-binding</keyword>
<keyword id="KW-0862">Zinc</keyword>
<comment type="function">
    <text evidence="1">Part of the Rad50/Mre11 complex, which is involved in the early steps of DNA double-strand break (DSB) repair. The complex may facilitate opening of the processed DNA ends to aid in the recruitment of HerA and NurA. Rad50 controls the balance between DNA end bridging and DNA resection via ATP-dependent structural rearrangements of the Rad50/Mre11 complex.</text>
</comment>
<comment type="cofactor">
    <cofactor evidence="1">
        <name>Zn(2+)</name>
        <dbReference type="ChEBI" id="CHEBI:29105"/>
    </cofactor>
    <text evidence="1">Binds 1 zinc ion per homodimer.</text>
</comment>
<comment type="subunit">
    <text evidence="1">Homodimer. Forms a heterotetramer composed of two Mre11 subunits and two Rad50 subunits.</text>
</comment>
<comment type="domain">
    <text evidence="1">The two conserved Cys that bind zinc constitute the zinc-hook, which separates the large intramolecular coiled coil regions. The 2 Cys residues coordinate one molecule of zinc with the help of the 2 Cys residues of the zinc-hook of another Rad50 molecule, thereby forming a V-shaped homodimer.</text>
</comment>
<comment type="similarity">
    <text evidence="1">Belongs to the SMC family. RAD50 subfamily.</text>
</comment>
<proteinExistence type="inferred from homology"/>
<sequence>MKIEEVKVYNFRSHEETVVRFRKGINLIIGQNGSGKSSLLDAILVGLYWSKKLRLRGLKKDEFRRIGGKGGTRIEIKFENDDSKYVLFRDFSRNVAYLKVQENGKWRHASEPSMESVSSYIERILPYNVFLNAIYIRQGQIDAILESDETRDKVVREILNLDKLESAYENLKRIKTNINLLIESKKSFIARTENIEELIKANEDELTKKLSEINEISSKLPPIRGELEKVRENVKELESIKGKISELKIQVEKLKGRKKGLEEKIVQIERSIEEKKAKISELEEIVKDIPKLQEKEKEYRKLKGFRDEYESKLRRLEKELSKWESELKAIEEVIKEGEKKKERAEEIREKLSEIEKRLEELKPYVEELEDAKQVQKQIERLKARLKGLSPGEVIEKLESLEKERTEIEEAIKEITTRIGQMEQEKNERMKAIEELRKAKGKCPVCGRELTEEHKKELMERYTLEIKKIEEELKRTTEEERKLRVNLRKLEIKLREFSVMRDIAEQIKELESKLKGFNLEELEQKEREFEGLNEEFNKLKGELLGLERDLKRIKALEGRRKLIEEKVRKAKEELENLHRQLRELGFESVEELNLRIQELEEFHDKYVEAKKSESELRELKNKLEKEKTELDQAFEMLADVENEIEEKEAKLKDLESKFNEEEYEEKRERLVKLEREVSSLTARLEELKKSVEQIKATLRKLKEEKEEREKAKLEIKKLEKALSKVEDLRKKIKDYKTLAKEQALNRISEIASEIFSEFTDGKYSNVIVRAEENKTKLFVVYEGKEVPLTFLSGGERIALGLAFRLALSMYLVGRIDLLILDEPTPFLDEERRRKLLDIMERHLRRISQVIMVSHDEELKDAADYVIRLRLEGGKSKVEVVS</sequence>